<reference key="1">
    <citation type="submission" date="2007-06" db="EMBL/GenBank/DDBJ databases">
        <authorList>
            <person name="Dodson R.J."/>
            <person name="Harkins D."/>
            <person name="Paulsen I.T."/>
        </authorList>
    </citation>
    <scope>NUCLEOTIDE SEQUENCE [LARGE SCALE GENOMIC DNA]</scope>
    <source>
        <strain>DSM 24068 / PA7</strain>
    </source>
</reference>
<accession>A6V491</accession>
<organism>
    <name type="scientific">Pseudomonas paraeruginosa (strain DSM 24068 / PA7)</name>
    <name type="common">Pseudomonas aeruginosa (strain PA7)</name>
    <dbReference type="NCBI Taxonomy" id="381754"/>
    <lineage>
        <taxon>Bacteria</taxon>
        <taxon>Pseudomonadati</taxon>
        <taxon>Pseudomonadota</taxon>
        <taxon>Gammaproteobacteria</taxon>
        <taxon>Pseudomonadales</taxon>
        <taxon>Pseudomonadaceae</taxon>
        <taxon>Pseudomonas</taxon>
        <taxon>Pseudomonas paraeruginosa</taxon>
    </lineage>
</organism>
<dbReference type="EMBL" id="CP000744">
    <property type="protein sequence ID" value="ABR81811.1"/>
    <property type="molecule type" value="Genomic_DNA"/>
</dbReference>
<dbReference type="RefSeq" id="WP_003090661.1">
    <property type="nucleotide sequence ID" value="NC_009656.1"/>
</dbReference>
<dbReference type="SMR" id="A6V491"/>
<dbReference type="GeneID" id="79913052"/>
<dbReference type="KEGG" id="pap:PSPA7_2510"/>
<dbReference type="HOGENOM" id="CLU_105066_1_3_6"/>
<dbReference type="Proteomes" id="UP000001582">
    <property type="component" value="Chromosome"/>
</dbReference>
<dbReference type="GO" id="GO:0005829">
    <property type="term" value="C:cytosol"/>
    <property type="evidence" value="ECO:0007669"/>
    <property type="project" value="TreeGrafter"/>
</dbReference>
<dbReference type="GO" id="GO:0003677">
    <property type="term" value="F:DNA binding"/>
    <property type="evidence" value="ECO:0007669"/>
    <property type="project" value="UniProtKB-UniRule"/>
</dbReference>
<dbReference type="GO" id="GO:0030527">
    <property type="term" value="F:structural constituent of chromatin"/>
    <property type="evidence" value="ECO:0007669"/>
    <property type="project" value="InterPro"/>
</dbReference>
<dbReference type="GO" id="GO:0006310">
    <property type="term" value="P:DNA recombination"/>
    <property type="evidence" value="ECO:0007669"/>
    <property type="project" value="UniProtKB-UniRule"/>
</dbReference>
<dbReference type="GO" id="GO:0009893">
    <property type="term" value="P:positive regulation of metabolic process"/>
    <property type="evidence" value="ECO:0007669"/>
    <property type="project" value="UniProtKB-ARBA"/>
</dbReference>
<dbReference type="GO" id="GO:0006355">
    <property type="term" value="P:regulation of DNA-templated transcription"/>
    <property type="evidence" value="ECO:0007669"/>
    <property type="project" value="UniProtKB-UniRule"/>
</dbReference>
<dbReference type="GO" id="GO:0006417">
    <property type="term" value="P:regulation of translation"/>
    <property type="evidence" value="ECO:0007669"/>
    <property type="project" value="UniProtKB-UniRule"/>
</dbReference>
<dbReference type="CDD" id="cd13835">
    <property type="entry name" value="IHF_A"/>
    <property type="match status" value="1"/>
</dbReference>
<dbReference type="FunFam" id="4.10.520.10:FF:000002">
    <property type="entry name" value="Integration host factor subunit alpha"/>
    <property type="match status" value="1"/>
</dbReference>
<dbReference type="Gene3D" id="4.10.520.10">
    <property type="entry name" value="IHF-like DNA-binding proteins"/>
    <property type="match status" value="1"/>
</dbReference>
<dbReference type="HAMAP" id="MF_00380">
    <property type="entry name" value="IHF_alpha"/>
    <property type="match status" value="1"/>
</dbReference>
<dbReference type="InterPro" id="IPR000119">
    <property type="entry name" value="Hist_DNA-bd"/>
</dbReference>
<dbReference type="InterPro" id="IPR020816">
    <property type="entry name" value="Histone-like_DNA-bd_CS"/>
</dbReference>
<dbReference type="InterPro" id="IPR010992">
    <property type="entry name" value="IHF-like_DNA-bd_dom_sf"/>
</dbReference>
<dbReference type="InterPro" id="IPR005684">
    <property type="entry name" value="IHF_alpha"/>
</dbReference>
<dbReference type="NCBIfam" id="TIGR00987">
    <property type="entry name" value="himA"/>
    <property type="match status" value="1"/>
</dbReference>
<dbReference type="NCBIfam" id="NF001401">
    <property type="entry name" value="PRK00285.1"/>
    <property type="match status" value="1"/>
</dbReference>
<dbReference type="PANTHER" id="PTHR33175">
    <property type="entry name" value="DNA-BINDING PROTEIN HU"/>
    <property type="match status" value="1"/>
</dbReference>
<dbReference type="PANTHER" id="PTHR33175:SF2">
    <property type="entry name" value="INTEGRATION HOST FACTOR SUBUNIT ALPHA"/>
    <property type="match status" value="1"/>
</dbReference>
<dbReference type="Pfam" id="PF00216">
    <property type="entry name" value="Bac_DNA_binding"/>
    <property type="match status" value="1"/>
</dbReference>
<dbReference type="PRINTS" id="PR01727">
    <property type="entry name" value="DNABINDINGHU"/>
</dbReference>
<dbReference type="SMART" id="SM00411">
    <property type="entry name" value="BHL"/>
    <property type="match status" value="1"/>
</dbReference>
<dbReference type="SUPFAM" id="SSF47729">
    <property type="entry name" value="IHF-like DNA-binding proteins"/>
    <property type="match status" value="1"/>
</dbReference>
<dbReference type="PROSITE" id="PS00045">
    <property type="entry name" value="HISTONE_LIKE"/>
    <property type="match status" value="1"/>
</dbReference>
<proteinExistence type="inferred from homology"/>
<keyword id="KW-0233">DNA recombination</keyword>
<keyword id="KW-0238">DNA-binding</keyword>
<keyword id="KW-0804">Transcription</keyword>
<keyword id="KW-0805">Transcription regulation</keyword>
<keyword id="KW-0810">Translation regulation</keyword>
<evidence type="ECO:0000255" key="1">
    <source>
        <dbReference type="HAMAP-Rule" id="MF_00380"/>
    </source>
</evidence>
<evidence type="ECO:0000256" key="2">
    <source>
        <dbReference type="SAM" id="MobiDB-lite"/>
    </source>
</evidence>
<sequence length="100" mass="11471">MGALTKAEIAERLYEELGLNKREAKELVELFFEEIRQALEHNEQVKLSGFGNFDLRDKRQRPGRNPKTGEEIPITARRVVTFRPGQKLKARVEAYAGTKS</sequence>
<protein>
    <recommendedName>
        <fullName evidence="1">Integration host factor subunit alpha</fullName>
        <shortName evidence="1">IHF-alpha</shortName>
    </recommendedName>
</protein>
<gene>
    <name evidence="1" type="primary">ihfA</name>
    <name evidence="1" type="synonym">himA</name>
    <name type="ordered locus">PSPA7_2510</name>
</gene>
<feature type="chain" id="PRO_1000060555" description="Integration host factor subunit alpha">
    <location>
        <begin position="1"/>
        <end position="100"/>
    </location>
</feature>
<feature type="region of interest" description="Disordered" evidence="2">
    <location>
        <begin position="54"/>
        <end position="73"/>
    </location>
</feature>
<comment type="function">
    <text evidence="1">This protein is one of the two subunits of integration host factor, a specific DNA-binding protein that functions in genetic recombination as well as in transcriptional and translational control.</text>
</comment>
<comment type="subunit">
    <text evidence="1">Heterodimer of an alpha and a beta chain.</text>
</comment>
<comment type="similarity">
    <text evidence="1">Belongs to the bacterial histone-like protein family.</text>
</comment>
<name>IHFA_PSEP7</name>